<keyword id="KW-0143">Chaperone</keyword>
<keyword id="KW-0963">Cytoplasm</keyword>
<keyword id="KW-0690">Ribosome biogenesis</keyword>
<keyword id="KW-0698">rRNA processing</keyword>
<reference key="1">
    <citation type="submission" date="2006-12" db="EMBL/GenBank/DDBJ databases">
        <title>Complete sequence of Mycobacterium vanbaalenii PYR-1.</title>
        <authorList>
            <consortium name="US DOE Joint Genome Institute"/>
            <person name="Copeland A."/>
            <person name="Lucas S."/>
            <person name="Lapidus A."/>
            <person name="Barry K."/>
            <person name="Detter J.C."/>
            <person name="Glavina del Rio T."/>
            <person name="Hammon N."/>
            <person name="Israni S."/>
            <person name="Dalin E."/>
            <person name="Tice H."/>
            <person name="Pitluck S."/>
            <person name="Singan V."/>
            <person name="Schmutz J."/>
            <person name="Larimer F."/>
            <person name="Land M."/>
            <person name="Hauser L."/>
            <person name="Kyrpides N."/>
            <person name="Anderson I.J."/>
            <person name="Miller C."/>
            <person name="Richardson P."/>
        </authorList>
    </citation>
    <scope>NUCLEOTIDE SEQUENCE [LARGE SCALE GENOMIC DNA]</scope>
    <source>
        <strain>DSM 7251 / JCM 13017 / BCRC 16820 / KCTC 9966 / NRRL B-24157 / PYR-1</strain>
    </source>
</reference>
<sequence>MDLVVGRVVKAHGVTGELAVDVRTDDPEGRFVAGAVLRGRPARGGAEREFVIESVRSHGDRMLIRLQGVGDRDAADALRGTLFLVDSAELPPIEDPDEFYDHQLEGMAVSTTGGQPVGTVAEVLHTAAGELLAVRDPDGAEVLVPFVSAIVVSVSLADNAIEIDPPEGLLDL</sequence>
<comment type="function">
    <text evidence="1">An accessory protein needed during the final step in the assembly of 30S ribosomal subunit, possibly for assembly of the head region. Essential for efficient processing of 16S rRNA. May be needed both before and after RbfA during the maturation of 16S rRNA. It has affinity for free ribosomal 30S subunits but not for 70S ribosomes.</text>
</comment>
<comment type="subunit">
    <text evidence="1">Binds ribosomal protein uS19.</text>
</comment>
<comment type="subcellular location">
    <subcellularLocation>
        <location evidence="1">Cytoplasm</location>
    </subcellularLocation>
</comment>
<comment type="domain">
    <text evidence="1">The PRC barrel domain binds ribosomal protein uS19.</text>
</comment>
<comment type="similarity">
    <text evidence="1">Belongs to the RimM family.</text>
</comment>
<feature type="chain" id="PRO_1000001203" description="Ribosome maturation factor RimM">
    <location>
        <begin position="1"/>
        <end position="172"/>
    </location>
</feature>
<feature type="domain" description="PRC barrel" evidence="1">
    <location>
        <begin position="96"/>
        <end position="169"/>
    </location>
</feature>
<evidence type="ECO:0000255" key="1">
    <source>
        <dbReference type="HAMAP-Rule" id="MF_00014"/>
    </source>
</evidence>
<gene>
    <name evidence="1" type="primary">rimM</name>
    <name type="ordered locus">Mvan_2189</name>
</gene>
<organism>
    <name type="scientific">Mycolicibacterium vanbaalenii (strain DSM 7251 / JCM 13017 / BCRC 16820 / KCTC 9966 / NRRL B-24157 / PYR-1)</name>
    <name type="common">Mycobacterium vanbaalenii</name>
    <dbReference type="NCBI Taxonomy" id="350058"/>
    <lineage>
        <taxon>Bacteria</taxon>
        <taxon>Bacillati</taxon>
        <taxon>Actinomycetota</taxon>
        <taxon>Actinomycetes</taxon>
        <taxon>Mycobacteriales</taxon>
        <taxon>Mycobacteriaceae</taxon>
        <taxon>Mycolicibacterium</taxon>
    </lineage>
</organism>
<name>RIMM_MYCVP</name>
<accession>A1T754</accession>
<protein>
    <recommendedName>
        <fullName evidence="1">Ribosome maturation factor RimM</fullName>
    </recommendedName>
</protein>
<dbReference type="EMBL" id="CP000511">
    <property type="protein sequence ID" value="ABM13004.1"/>
    <property type="molecule type" value="Genomic_DNA"/>
</dbReference>
<dbReference type="RefSeq" id="WP_011779417.1">
    <property type="nucleotide sequence ID" value="NC_008726.1"/>
</dbReference>
<dbReference type="SMR" id="A1T754"/>
<dbReference type="STRING" id="350058.Mvan_2189"/>
<dbReference type="KEGG" id="mva:Mvan_2189"/>
<dbReference type="eggNOG" id="COG0806">
    <property type="taxonomic scope" value="Bacteria"/>
</dbReference>
<dbReference type="HOGENOM" id="CLU_077636_0_0_11"/>
<dbReference type="Proteomes" id="UP000009159">
    <property type="component" value="Chromosome"/>
</dbReference>
<dbReference type="GO" id="GO:0005737">
    <property type="term" value="C:cytoplasm"/>
    <property type="evidence" value="ECO:0007669"/>
    <property type="project" value="UniProtKB-SubCell"/>
</dbReference>
<dbReference type="GO" id="GO:0005840">
    <property type="term" value="C:ribosome"/>
    <property type="evidence" value="ECO:0007669"/>
    <property type="project" value="InterPro"/>
</dbReference>
<dbReference type="GO" id="GO:0043022">
    <property type="term" value="F:ribosome binding"/>
    <property type="evidence" value="ECO:0007669"/>
    <property type="project" value="InterPro"/>
</dbReference>
<dbReference type="GO" id="GO:0042274">
    <property type="term" value="P:ribosomal small subunit biogenesis"/>
    <property type="evidence" value="ECO:0007669"/>
    <property type="project" value="UniProtKB-UniRule"/>
</dbReference>
<dbReference type="GO" id="GO:0006364">
    <property type="term" value="P:rRNA processing"/>
    <property type="evidence" value="ECO:0007669"/>
    <property type="project" value="UniProtKB-UniRule"/>
</dbReference>
<dbReference type="Gene3D" id="2.30.30.240">
    <property type="entry name" value="PRC-barrel domain"/>
    <property type="match status" value="1"/>
</dbReference>
<dbReference type="Gene3D" id="2.40.30.60">
    <property type="entry name" value="RimM"/>
    <property type="match status" value="1"/>
</dbReference>
<dbReference type="HAMAP" id="MF_00014">
    <property type="entry name" value="Ribosome_mat_RimM"/>
    <property type="match status" value="1"/>
</dbReference>
<dbReference type="InterPro" id="IPR011033">
    <property type="entry name" value="PRC_barrel-like_sf"/>
</dbReference>
<dbReference type="InterPro" id="IPR056792">
    <property type="entry name" value="PRC_RimM"/>
</dbReference>
<dbReference type="InterPro" id="IPR011961">
    <property type="entry name" value="RimM"/>
</dbReference>
<dbReference type="InterPro" id="IPR002676">
    <property type="entry name" value="RimM_N"/>
</dbReference>
<dbReference type="InterPro" id="IPR036976">
    <property type="entry name" value="RimM_N_sf"/>
</dbReference>
<dbReference type="InterPro" id="IPR009000">
    <property type="entry name" value="Transl_B-barrel_sf"/>
</dbReference>
<dbReference type="NCBIfam" id="TIGR02273">
    <property type="entry name" value="16S_RimM"/>
    <property type="match status" value="1"/>
</dbReference>
<dbReference type="PANTHER" id="PTHR33692">
    <property type="entry name" value="RIBOSOME MATURATION FACTOR RIMM"/>
    <property type="match status" value="1"/>
</dbReference>
<dbReference type="PANTHER" id="PTHR33692:SF1">
    <property type="entry name" value="RIBOSOME MATURATION FACTOR RIMM"/>
    <property type="match status" value="1"/>
</dbReference>
<dbReference type="Pfam" id="PF24986">
    <property type="entry name" value="PRC_RimM"/>
    <property type="match status" value="1"/>
</dbReference>
<dbReference type="Pfam" id="PF01782">
    <property type="entry name" value="RimM"/>
    <property type="match status" value="1"/>
</dbReference>
<dbReference type="SUPFAM" id="SSF50346">
    <property type="entry name" value="PRC-barrel domain"/>
    <property type="match status" value="1"/>
</dbReference>
<dbReference type="SUPFAM" id="SSF50447">
    <property type="entry name" value="Translation proteins"/>
    <property type="match status" value="1"/>
</dbReference>
<proteinExistence type="inferred from homology"/>